<proteinExistence type="inferred from homology"/>
<evidence type="ECO:0000255" key="1">
    <source>
        <dbReference type="HAMAP-Rule" id="MF_00017"/>
    </source>
</evidence>
<evidence type="ECO:0000305" key="2"/>
<accession>Q4ULQ0</accession>
<feature type="chain" id="PRO_0000190375" description="Recombination protein RecR">
    <location>
        <begin position="1"/>
        <end position="201"/>
    </location>
</feature>
<feature type="domain" description="Toprim" evidence="1">
    <location>
        <begin position="82"/>
        <end position="177"/>
    </location>
</feature>
<feature type="zinc finger region" description="C4-type" evidence="1">
    <location>
        <begin position="59"/>
        <end position="74"/>
    </location>
</feature>
<comment type="function">
    <text evidence="1">May play a role in DNA repair. It seems to be involved in an RecBC-independent recombinational process of DNA repair. It may act with RecF and RecO.</text>
</comment>
<comment type="similarity">
    <text evidence="1">Belongs to the RecR family.</text>
</comment>
<comment type="sequence caution" evidence="2">
    <conflict type="erroneous initiation">
        <sequence resource="EMBL-CDS" id="AAY61523"/>
    </conflict>
</comment>
<gene>
    <name evidence="1" type="primary">recR</name>
    <name type="ordered locus">RF_0672</name>
</gene>
<sequence length="201" mass="22610">MNKTNDNDIDQLIYLFSKLPGLGSRSARRIVLYLLQDKDVRLKSLINNLVEIDKKIVKCEICGNMDTENICCICSSEYRDKSVIAVVETVAELWAMERSSNFKGLYHVLGHNLSAASRQNPSILRLPELLKRCFAENIKEVIIATNSTLEGQTTAYFITEYLREHPAKISRLASGIPIGGELDYLDEGTLSAAINLRQPFE</sequence>
<protein>
    <recommendedName>
        <fullName evidence="1">Recombination protein RecR</fullName>
    </recommendedName>
</protein>
<reference key="1">
    <citation type="journal article" date="2005" name="PLoS Biol.">
        <title>The genome sequence of Rickettsia felis identifies the first putative conjugative plasmid in an obligate intracellular parasite.</title>
        <authorList>
            <person name="Ogata H."/>
            <person name="Renesto P."/>
            <person name="Audic S."/>
            <person name="Robert C."/>
            <person name="Blanc G."/>
            <person name="Fournier P.-E."/>
            <person name="Parinello H."/>
            <person name="Claverie J.-M."/>
            <person name="Raoult D."/>
        </authorList>
    </citation>
    <scope>NUCLEOTIDE SEQUENCE [LARGE SCALE GENOMIC DNA]</scope>
    <source>
        <strain>ATCC VR-1525 / URRWXCal2</strain>
    </source>
</reference>
<keyword id="KW-0227">DNA damage</keyword>
<keyword id="KW-0233">DNA recombination</keyword>
<keyword id="KW-0234">DNA repair</keyword>
<keyword id="KW-0479">Metal-binding</keyword>
<keyword id="KW-0862">Zinc</keyword>
<keyword id="KW-0863">Zinc-finger</keyword>
<organism>
    <name type="scientific">Rickettsia felis (strain ATCC VR-1525 / URRWXCal2)</name>
    <name type="common">Rickettsia azadi</name>
    <dbReference type="NCBI Taxonomy" id="315456"/>
    <lineage>
        <taxon>Bacteria</taxon>
        <taxon>Pseudomonadati</taxon>
        <taxon>Pseudomonadota</taxon>
        <taxon>Alphaproteobacteria</taxon>
        <taxon>Rickettsiales</taxon>
        <taxon>Rickettsiaceae</taxon>
        <taxon>Rickettsieae</taxon>
        <taxon>Rickettsia</taxon>
        <taxon>spotted fever group</taxon>
    </lineage>
</organism>
<name>RECR_RICFE</name>
<dbReference type="EMBL" id="CP000053">
    <property type="protein sequence ID" value="AAY61523.1"/>
    <property type="status" value="ALT_INIT"/>
    <property type="molecule type" value="Genomic_DNA"/>
</dbReference>
<dbReference type="SMR" id="Q4ULQ0"/>
<dbReference type="STRING" id="315456.RF_0672"/>
<dbReference type="KEGG" id="rfe:RF_0672"/>
<dbReference type="eggNOG" id="COG0353">
    <property type="taxonomic scope" value="Bacteria"/>
</dbReference>
<dbReference type="HOGENOM" id="CLU_060739_1_1_5"/>
<dbReference type="OrthoDB" id="9802672at2"/>
<dbReference type="Proteomes" id="UP000008548">
    <property type="component" value="Chromosome"/>
</dbReference>
<dbReference type="GO" id="GO:0003677">
    <property type="term" value="F:DNA binding"/>
    <property type="evidence" value="ECO:0007669"/>
    <property type="project" value="UniProtKB-UniRule"/>
</dbReference>
<dbReference type="GO" id="GO:0008270">
    <property type="term" value="F:zinc ion binding"/>
    <property type="evidence" value="ECO:0007669"/>
    <property type="project" value="UniProtKB-KW"/>
</dbReference>
<dbReference type="GO" id="GO:0006310">
    <property type="term" value="P:DNA recombination"/>
    <property type="evidence" value="ECO:0007669"/>
    <property type="project" value="UniProtKB-UniRule"/>
</dbReference>
<dbReference type="GO" id="GO:0006281">
    <property type="term" value="P:DNA repair"/>
    <property type="evidence" value="ECO:0007669"/>
    <property type="project" value="UniProtKB-UniRule"/>
</dbReference>
<dbReference type="CDD" id="cd01025">
    <property type="entry name" value="TOPRIM_recR"/>
    <property type="match status" value="1"/>
</dbReference>
<dbReference type="Gene3D" id="3.40.1360.10">
    <property type="match status" value="1"/>
</dbReference>
<dbReference type="Gene3D" id="6.10.250.240">
    <property type="match status" value="1"/>
</dbReference>
<dbReference type="Gene3D" id="1.10.8.420">
    <property type="entry name" value="RecR Domain 1"/>
    <property type="match status" value="1"/>
</dbReference>
<dbReference type="HAMAP" id="MF_00017">
    <property type="entry name" value="RecR"/>
    <property type="match status" value="1"/>
</dbReference>
<dbReference type="InterPro" id="IPR000093">
    <property type="entry name" value="DNA_Rcmb_RecR"/>
</dbReference>
<dbReference type="InterPro" id="IPR023627">
    <property type="entry name" value="Rcmb_RecR"/>
</dbReference>
<dbReference type="InterPro" id="IPR015967">
    <property type="entry name" value="Rcmb_RecR_Znf"/>
</dbReference>
<dbReference type="InterPro" id="IPR006171">
    <property type="entry name" value="TOPRIM_dom"/>
</dbReference>
<dbReference type="InterPro" id="IPR034137">
    <property type="entry name" value="TOPRIM_RecR"/>
</dbReference>
<dbReference type="NCBIfam" id="TIGR00615">
    <property type="entry name" value="recR"/>
    <property type="match status" value="1"/>
</dbReference>
<dbReference type="PANTHER" id="PTHR30446">
    <property type="entry name" value="RECOMBINATION PROTEIN RECR"/>
    <property type="match status" value="1"/>
</dbReference>
<dbReference type="PANTHER" id="PTHR30446:SF0">
    <property type="entry name" value="RECOMBINATION PROTEIN RECR"/>
    <property type="match status" value="1"/>
</dbReference>
<dbReference type="Pfam" id="PF21175">
    <property type="entry name" value="RecR_C"/>
    <property type="match status" value="1"/>
</dbReference>
<dbReference type="Pfam" id="PF21176">
    <property type="entry name" value="RecR_HhH"/>
    <property type="match status" value="1"/>
</dbReference>
<dbReference type="Pfam" id="PF13662">
    <property type="entry name" value="Toprim_4"/>
    <property type="match status" value="1"/>
</dbReference>
<dbReference type="SMART" id="SM00493">
    <property type="entry name" value="TOPRIM"/>
    <property type="match status" value="1"/>
</dbReference>
<dbReference type="SUPFAM" id="SSF111304">
    <property type="entry name" value="Recombination protein RecR"/>
    <property type="match status" value="1"/>
</dbReference>
<dbReference type="PROSITE" id="PS01300">
    <property type="entry name" value="RECR"/>
    <property type="match status" value="1"/>
</dbReference>
<dbReference type="PROSITE" id="PS50880">
    <property type="entry name" value="TOPRIM"/>
    <property type="match status" value="1"/>
</dbReference>